<sequence length="387" mass="44022">MQNINQIKLTWISFFSYAFTGALIVITGMIMGDIADYFNLSVSEMSNIFTFLNAGILISIFLNSWLIDLISIKKQLIFGFLFSIIAILGIVFSTSILLFSINIFILGLVSGITMSIGTFIITCLYSGEKRGSQLLLTDSFFSMSGMIFPIISAYLLDRKILWYWIYVFLGIIYFLIFILTVKSHFPVSEEKTKNNNEIKNLNINIILLSISALLYILGQLSFISWVPQYTTEIININIKKTGVLVSNFWMAYMIGMWCFSFIIKFFNLQRMFIFLTGSSSVLMYCFIYSKSYLALKYTIISLGFFSSAIYTIIITLASLETKKPSAKLINLILFFGTIGTLLTFIITSPIVAKKGLYTTLIFSNVLYVIVFFLSCIIFKNSKKKDHC</sequence>
<gene>
    <name evidence="1" type="primary">tsgA</name>
    <name type="ordered locus">BUsg_516</name>
</gene>
<keyword id="KW-1003">Cell membrane</keyword>
<keyword id="KW-0472">Membrane</keyword>
<keyword id="KW-0812">Transmembrane</keyword>
<keyword id="KW-1133">Transmembrane helix</keyword>
<name>TSGA_BUCAP</name>
<feature type="chain" id="PRO_0000206492" description="Protein TsgA homolog">
    <location>
        <begin position="1"/>
        <end position="387"/>
    </location>
</feature>
<feature type="transmembrane region" description="Helical" evidence="1">
    <location>
        <begin position="11"/>
        <end position="31"/>
    </location>
</feature>
<feature type="transmembrane region" description="Helical" evidence="1">
    <location>
        <begin position="47"/>
        <end position="67"/>
    </location>
</feature>
<feature type="transmembrane region" description="Helical" evidence="1">
    <location>
        <begin position="76"/>
        <end position="96"/>
    </location>
</feature>
<feature type="transmembrane region" description="Helical" evidence="1">
    <location>
        <begin position="101"/>
        <end position="121"/>
    </location>
</feature>
<feature type="transmembrane region" description="Helical" evidence="1">
    <location>
        <begin position="134"/>
        <end position="154"/>
    </location>
</feature>
<feature type="transmembrane region" description="Helical" evidence="1">
    <location>
        <begin position="160"/>
        <end position="180"/>
    </location>
</feature>
<feature type="transmembrane region" description="Helical" evidence="1">
    <location>
        <begin position="205"/>
        <end position="225"/>
    </location>
</feature>
<feature type="transmembrane region" description="Helical" evidence="1">
    <location>
        <begin position="243"/>
        <end position="263"/>
    </location>
</feature>
<feature type="transmembrane region" description="Helical" evidence="1">
    <location>
        <begin position="271"/>
        <end position="291"/>
    </location>
</feature>
<feature type="transmembrane region" description="Helical" evidence="1">
    <location>
        <begin position="299"/>
        <end position="319"/>
    </location>
</feature>
<feature type="transmembrane region" description="Helical" evidence="1">
    <location>
        <begin position="331"/>
        <end position="351"/>
    </location>
</feature>
<feature type="transmembrane region" description="Helical" evidence="1">
    <location>
        <begin position="358"/>
        <end position="378"/>
    </location>
</feature>
<accession>Q8K942</accession>
<comment type="subcellular location">
    <subcellularLocation>
        <location evidence="1">Cell membrane</location>
        <topology evidence="1">Multi-pass membrane protein</topology>
    </subcellularLocation>
</comment>
<comment type="similarity">
    <text evidence="1">Belongs to the major facilitator superfamily. TsgA family.</text>
</comment>
<protein>
    <recommendedName>
        <fullName evidence="1">Protein TsgA homolog</fullName>
    </recommendedName>
</protein>
<evidence type="ECO:0000255" key="1">
    <source>
        <dbReference type="HAMAP-Rule" id="MF_01044"/>
    </source>
</evidence>
<organism>
    <name type="scientific">Buchnera aphidicola subsp. Schizaphis graminum (strain Sg)</name>
    <dbReference type="NCBI Taxonomy" id="198804"/>
    <lineage>
        <taxon>Bacteria</taxon>
        <taxon>Pseudomonadati</taxon>
        <taxon>Pseudomonadota</taxon>
        <taxon>Gammaproteobacteria</taxon>
        <taxon>Enterobacterales</taxon>
        <taxon>Erwiniaceae</taxon>
        <taxon>Buchnera</taxon>
    </lineage>
</organism>
<proteinExistence type="inferred from homology"/>
<dbReference type="EMBL" id="AE013218">
    <property type="protein sequence ID" value="AAM68059.1"/>
    <property type="molecule type" value="Genomic_DNA"/>
</dbReference>
<dbReference type="RefSeq" id="WP_011054025.1">
    <property type="nucleotide sequence ID" value="NC_004061.1"/>
</dbReference>
<dbReference type="SMR" id="Q8K942"/>
<dbReference type="STRING" id="198804.BUsg_516"/>
<dbReference type="GeneID" id="93003991"/>
<dbReference type="KEGG" id="bas:BUsg_516"/>
<dbReference type="eggNOG" id="COG0738">
    <property type="taxonomic scope" value="Bacteria"/>
</dbReference>
<dbReference type="HOGENOM" id="CLU_056916_0_0_6"/>
<dbReference type="Proteomes" id="UP000000416">
    <property type="component" value="Chromosome"/>
</dbReference>
<dbReference type="GO" id="GO:0005886">
    <property type="term" value="C:plasma membrane"/>
    <property type="evidence" value="ECO:0007669"/>
    <property type="project" value="UniProtKB-SubCell"/>
</dbReference>
<dbReference type="GO" id="GO:0022857">
    <property type="term" value="F:transmembrane transporter activity"/>
    <property type="evidence" value="ECO:0007669"/>
    <property type="project" value="InterPro"/>
</dbReference>
<dbReference type="Gene3D" id="1.20.1250.20">
    <property type="entry name" value="MFS general substrate transporter like domains"/>
    <property type="match status" value="2"/>
</dbReference>
<dbReference type="HAMAP" id="MF_01044">
    <property type="entry name" value="MFS_TsgA"/>
    <property type="match status" value="1"/>
</dbReference>
<dbReference type="InterPro" id="IPR011701">
    <property type="entry name" value="MFS"/>
</dbReference>
<dbReference type="InterPro" id="IPR020846">
    <property type="entry name" value="MFS_dom"/>
</dbReference>
<dbReference type="InterPro" id="IPR036259">
    <property type="entry name" value="MFS_trans_sf"/>
</dbReference>
<dbReference type="InterPro" id="IPR023528">
    <property type="entry name" value="MFS_TsgA"/>
</dbReference>
<dbReference type="InterPro" id="IPR050375">
    <property type="entry name" value="MFS_TsgA-like"/>
</dbReference>
<dbReference type="NCBIfam" id="NF002982">
    <property type="entry name" value="PRK03699.1"/>
    <property type="match status" value="1"/>
</dbReference>
<dbReference type="PANTHER" id="PTHR43702">
    <property type="entry name" value="L-FUCOSE-PROTON SYMPORTER"/>
    <property type="match status" value="1"/>
</dbReference>
<dbReference type="PANTHER" id="PTHR43702:SF3">
    <property type="entry name" value="PROTEIN TSGA"/>
    <property type="match status" value="1"/>
</dbReference>
<dbReference type="Pfam" id="PF07690">
    <property type="entry name" value="MFS_1"/>
    <property type="match status" value="1"/>
</dbReference>
<dbReference type="SUPFAM" id="SSF103473">
    <property type="entry name" value="MFS general substrate transporter"/>
    <property type="match status" value="1"/>
</dbReference>
<dbReference type="PROSITE" id="PS50850">
    <property type="entry name" value="MFS"/>
    <property type="match status" value="1"/>
</dbReference>
<reference key="1">
    <citation type="journal article" date="2002" name="Science">
        <title>50 million years of genomic stasis in endosymbiotic bacteria.</title>
        <authorList>
            <person name="Tamas I."/>
            <person name="Klasson L."/>
            <person name="Canbaeck B."/>
            <person name="Naeslund A.K."/>
            <person name="Eriksson A.-S."/>
            <person name="Wernegreen J.J."/>
            <person name="Sandstroem J.P."/>
            <person name="Moran N.A."/>
            <person name="Andersson S.G.E."/>
        </authorList>
    </citation>
    <scope>NUCLEOTIDE SEQUENCE [LARGE SCALE GENOMIC DNA]</scope>
    <source>
        <strain>Sg</strain>
    </source>
</reference>